<keyword id="KW-1185">Reference proteome</keyword>
<reference key="1">
    <citation type="journal article" date="1995" name="Science">
        <title>Whole-genome random sequencing and assembly of Haemophilus influenzae Rd.</title>
        <authorList>
            <person name="Fleischmann R.D."/>
            <person name="Adams M.D."/>
            <person name="White O."/>
            <person name="Clayton R.A."/>
            <person name="Kirkness E.F."/>
            <person name="Kerlavage A.R."/>
            <person name="Bult C.J."/>
            <person name="Tomb J.-F."/>
            <person name="Dougherty B.A."/>
            <person name="Merrick J.M."/>
            <person name="McKenney K."/>
            <person name="Sutton G.G."/>
            <person name="FitzHugh W."/>
            <person name="Fields C.A."/>
            <person name="Gocayne J.D."/>
            <person name="Scott J.D."/>
            <person name="Shirley R."/>
            <person name="Liu L.-I."/>
            <person name="Glodek A."/>
            <person name="Kelley J.M."/>
            <person name="Weidman J.F."/>
            <person name="Phillips C.A."/>
            <person name="Spriggs T."/>
            <person name="Hedblom E."/>
            <person name="Cotton M.D."/>
            <person name="Utterback T.R."/>
            <person name="Hanna M.C."/>
            <person name="Nguyen D.T."/>
            <person name="Saudek D.M."/>
            <person name="Brandon R.C."/>
            <person name="Fine L.D."/>
            <person name="Fritchman J.L."/>
            <person name="Fuhrmann J.L."/>
            <person name="Geoghagen N.S.M."/>
            <person name="Gnehm C.L."/>
            <person name="McDonald L.A."/>
            <person name="Small K.V."/>
            <person name="Fraser C.M."/>
            <person name="Smith H.O."/>
            <person name="Venter J.C."/>
        </authorList>
    </citation>
    <scope>NUCLEOTIDE SEQUENCE [LARGE SCALE GENOMIC DNA]</scope>
    <source>
        <strain>ATCC 51907 / DSM 11121 / KW20 / Rd</strain>
    </source>
</reference>
<proteinExistence type="predicted"/>
<accession>P44050</accession>
<protein>
    <recommendedName>
        <fullName>Uncharacterized protein HI_0762</fullName>
    </recommendedName>
</protein>
<dbReference type="EMBL" id="L42023">
    <property type="protein sequence ID" value="AAC22429.1"/>
    <property type="molecule type" value="Genomic_DNA"/>
</dbReference>
<dbReference type="PIR" id="E64013">
    <property type="entry name" value="E64013"/>
</dbReference>
<dbReference type="RefSeq" id="NP_438921.1">
    <property type="nucleotide sequence ID" value="NC_000907.1"/>
</dbReference>
<dbReference type="SMR" id="P44050"/>
<dbReference type="STRING" id="71421.HI_0762"/>
<dbReference type="EnsemblBacteria" id="AAC22429">
    <property type="protein sequence ID" value="AAC22429"/>
    <property type="gene ID" value="HI_0762"/>
</dbReference>
<dbReference type="KEGG" id="hin:HI_0762"/>
<dbReference type="PATRIC" id="fig|71421.8.peg.801"/>
<dbReference type="eggNOG" id="COG2129">
    <property type="taxonomic scope" value="Bacteria"/>
</dbReference>
<dbReference type="HOGENOM" id="CLU_084430_0_0_6"/>
<dbReference type="OrthoDB" id="7831721at2"/>
<dbReference type="BioCyc" id="HINF71421:G1GJ1-802-MONOMER"/>
<dbReference type="Proteomes" id="UP000000579">
    <property type="component" value="Chromosome"/>
</dbReference>
<dbReference type="GO" id="GO:0016787">
    <property type="term" value="F:hydrolase activity"/>
    <property type="evidence" value="ECO:0007669"/>
    <property type="project" value="InterPro"/>
</dbReference>
<dbReference type="CDD" id="cd00838">
    <property type="entry name" value="MPP_superfamily"/>
    <property type="match status" value="1"/>
</dbReference>
<dbReference type="Gene3D" id="3.60.21.10">
    <property type="match status" value="1"/>
</dbReference>
<dbReference type="InterPro" id="IPR004843">
    <property type="entry name" value="Calcineurin-like_PHP_ApaH"/>
</dbReference>
<dbReference type="InterPro" id="IPR029052">
    <property type="entry name" value="Metallo-depent_PP-like"/>
</dbReference>
<dbReference type="InterPro" id="IPR017056">
    <property type="entry name" value="P-Estase_HI0762_prd"/>
</dbReference>
<dbReference type="Pfam" id="PF00149">
    <property type="entry name" value="Metallophos"/>
    <property type="match status" value="1"/>
</dbReference>
<dbReference type="PIRSF" id="PIRSF036446">
    <property type="entry name" value="Phosphoesterase_HI0762_prd"/>
    <property type="match status" value="1"/>
</dbReference>
<dbReference type="SUPFAM" id="SSF56300">
    <property type="entry name" value="Metallo-dependent phosphatases"/>
    <property type="match status" value="1"/>
</dbReference>
<name>Y762_HAEIN</name>
<organism>
    <name type="scientific">Haemophilus influenzae (strain ATCC 51907 / DSM 11121 / KW20 / Rd)</name>
    <dbReference type="NCBI Taxonomy" id="71421"/>
    <lineage>
        <taxon>Bacteria</taxon>
        <taxon>Pseudomonadati</taxon>
        <taxon>Pseudomonadota</taxon>
        <taxon>Gammaproteobacteria</taxon>
        <taxon>Pasteurellales</taxon>
        <taxon>Pasteurellaceae</taxon>
        <taxon>Haemophilus</taxon>
    </lineage>
</organism>
<feature type="chain" id="PRO_0000077954" description="Uncharacterized protein HI_0762">
    <location>
        <begin position="1"/>
        <end position="226"/>
    </location>
</feature>
<gene>
    <name type="ordered locus">HI_0762</name>
</gene>
<sequence>MILFAGDPHGSYDHIYPFIKEQENVALIILGDLQLTTSDELDKLAKHCDIWFIHGNHDSKTISAFDSIWGSEWQSRNLHNRVVDIQGTRIAGLGGVFRGQIWMPPNRPMFFDPIHYCQYSPQEKIWRGGVPLRHRTSIFPSDIEILENQQADVLICHEAPKPHPMGFQVINDLAMKMGVKLVFHGHHHENFTYRTKYPYKITNVGFRSLADAEGNYLLQTIDDREK</sequence>